<reference key="1">
    <citation type="journal article" date="2005" name="Nature">
        <title>Genome sequencing and analysis of Aspergillus oryzae.</title>
        <authorList>
            <person name="Machida M."/>
            <person name="Asai K."/>
            <person name="Sano M."/>
            <person name="Tanaka T."/>
            <person name="Kumagai T."/>
            <person name="Terai G."/>
            <person name="Kusumoto K."/>
            <person name="Arima T."/>
            <person name="Akita O."/>
            <person name="Kashiwagi Y."/>
            <person name="Abe K."/>
            <person name="Gomi K."/>
            <person name="Horiuchi H."/>
            <person name="Kitamoto K."/>
            <person name="Kobayashi T."/>
            <person name="Takeuchi M."/>
            <person name="Denning D.W."/>
            <person name="Galagan J.E."/>
            <person name="Nierman W.C."/>
            <person name="Yu J."/>
            <person name="Archer D.B."/>
            <person name="Bennett J.W."/>
            <person name="Bhatnagar D."/>
            <person name="Cleveland T.E."/>
            <person name="Fedorova N.D."/>
            <person name="Gotoh O."/>
            <person name="Horikawa H."/>
            <person name="Hosoyama A."/>
            <person name="Ichinomiya M."/>
            <person name="Igarashi R."/>
            <person name="Iwashita K."/>
            <person name="Juvvadi P.R."/>
            <person name="Kato M."/>
            <person name="Kato Y."/>
            <person name="Kin T."/>
            <person name="Kokubun A."/>
            <person name="Maeda H."/>
            <person name="Maeyama N."/>
            <person name="Maruyama J."/>
            <person name="Nagasaki H."/>
            <person name="Nakajima T."/>
            <person name="Oda K."/>
            <person name="Okada K."/>
            <person name="Paulsen I."/>
            <person name="Sakamoto K."/>
            <person name="Sawano T."/>
            <person name="Takahashi M."/>
            <person name="Takase K."/>
            <person name="Terabayashi Y."/>
            <person name="Wortman J.R."/>
            <person name="Yamada O."/>
            <person name="Yamagata Y."/>
            <person name="Anazawa H."/>
            <person name="Hata Y."/>
            <person name="Koide Y."/>
            <person name="Komori T."/>
            <person name="Koyama Y."/>
            <person name="Minetoki T."/>
            <person name="Suharnan S."/>
            <person name="Tanaka A."/>
            <person name="Isono K."/>
            <person name="Kuhara S."/>
            <person name="Ogasawara N."/>
            <person name="Kikuchi H."/>
        </authorList>
    </citation>
    <scope>NUCLEOTIDE SEQUENCE [LARGE SCALE GENOMIC DNA]</scope>
    <source>
        <strain>ATCC 42149 / RIB 40</strain>
    </source>
</reference>
<evidence type="ECO:0000250" key="1"/>
<evidence type="ECO:0000305" key="2"/>
<proteinExistence type="inferred from homology"/>
<sequence length="229" mass="24587">MTTAAVFGSTGAVGGQILATLLASDAFSSVKTVSRRLPNAQSPKLQTLEEGDITKWGGLIASLSPKPSIVFNAVGTTRAAAGGIANQWKIDHDLCIENAKAAKEAGVKTYVFISSGGTRGFFSRYVPYSKMKIGVEDAIKELDFEQAIILRPGLILQREKPKAALLENIVQNLNKLGQGVQDMIGQDQTVIGRAAVAAARMAEEGKAPSKYWVLEQADIVRLGRDEWKQ</sequence>
<feature type="transit peptide" description="Mitochondrion">
    <location>
        <begin position="1"/>
        <end position="45"/>
    </location>
</feature>
<feature type="chain" id="PRO_0000301814" description="Protein fmp52-2, mitochondrial">
    <location>
        <begin position="46"/>
        <end position="229"/>
    </location>
</feature>
<protein>
    <recommendedName>
        <fullName>Protein fmp52-2, mitochondrial</fullName>
    </recommendedName>
</protein>
<dbReference type="EMBL" id="BA000056">
    <property type="protein sequence ID" value="BAE66040.1"/>
    <property type="molecule type" value="Genomic_DNA"/>
</dbReference>
<dbReference type="RefSeq" id="XP_001827173.1">
    <property type="nucleotide sequence ID" value="XM_001827121.1"/>
</dbReference>
<dbReference type="SMR" id="Q2TXI3"/>
<dbReference type="STRING" id="510516.Q2TXI3"/>
<dbReference type="EnsemblFungi" id="BAE66040">
    <property type="protein sequence ID" value="BAE66040"/>
    <property type="gene ID" value="AO090010000132"/>
</dbReference>
<dbReference type="GeneID" id="5999307"/>
<dbReference type="KEGG" id="aor:AO090010000132"/>
<dbReference type="VEuPathDB" id="FungiDB:AO090010000132"/>
<dbReference type="HOGENOM" id="CLU_071330_3_0_1"/>
<dbReference type="OMA" id="CIENAKA"/>
<dbReference type="OrthoDB" id="45137at5052"/>
<dbReference type="Proteomes" id="UP000006564">
    <property type="component" value="Chromosome 8"/>
</dbReference>
<dbReference type="GO" id="GO:0005741">
    <property type="term" value="C:mitochondrial outer membrane"/>
    <property type="evidence" value="ECO:0007669"/>
    <property type="project" value="UniProtKB-SubCell"/>
</dbReference>
<dbReference type="GO" id="GO:0051170">
    <property type="term" value="P:import into nucleus"/>
    <property type="evidence" value="ECO:0007669"/>
    <property type="project" value="TreeGrafter"/>
</dbReference>
<dbReference type="FunFam" id="3.40.50.720:FF:000366">
    <property type="entry name" value="Protein FMP52, mitochondrial"/>
    <property type="match status" value="1"/>
</dbReference>
<dbReference type="Gene3D" id="3.40.50.720">
    <property type="entry name" value="NAD(P)-binding Rossmann-like Domain"/>
    <property type="match status" value="1"/>
</dbReference>
<dbReference type="InterPro" id="IPR016040">
    <property type="entry name" value="NAD(P)-bd_dom"/>
</dbReference>
<dbReference type="InterPro" id="IPR036291">
    <property type="entry name" value="NAD(P)-bd_dom_sf"/>
</dbReference>
<dbReference type="PANTHER" id="PTHR14097">
    <property type="entry name" value="OXIDOREDUCTASE HTATIP2"/>
    <property type="match status" value="1"/>
</dbReference>
<dbReference type="PANTHER" id="PTHR14097:SF7">
    <property type="entry name" value="OXIDOREDUCTASE HTATIP2"/>
    <property type="match status" value="1"/>
</dbReference>
<dbReference type="Pfam" id="PF13460">
    <property type="entry name" value="NAD_binding_10"/>
    <property type="match status" value="1"/>
</dbReference>
<dbReference type="SUPFAM" id="SSF51735">
    <property type="entry name" value="NAD(P)-binding Rossmann-fold domains"/>
    <property type="match status" value="1"/>
</dbReference>
<gene>
    <name type="primary">fmp522</name>
    <name type="ORF">AO090010000132</name>
</gene>
<accession>Q2TXI3</accession>
<comment type="subcellular location">
    <subcellularLocation>
        <location evidence="1">Mitochondrion outer membrane</location>
        <topology evidence="1">Peripheral membrane protein</topology>
    </subcellularLocation>
</comment>
<comment type="similarity">
    <text evidence="2">Belongs to the FMP52 family.</text>
</comment>
<keyword id="KW-0472">Membrane</keyword>
<keyword id="KW-0496">Mitochondrion</keyword>
<keyword id="KW-1000">Mitochondrion outer membrane</keyword>
<keyword id="KW-1185">Reference proteome</keyword>
<keyword id="KW-0809">Transit peptide</keyword>
<name>FM522_ASPOR</name>
<organism>
    <name type="scientific">Aspergillus oryzae (strain ATCC 42149 / RIB 40)</name>
    <name type="common">Yellow koji mold</name>
    <dbReference type="NCBI Taxonomy" id="510516"/>
    <lineage>
        <taxon>Eukaryota</taxon>
        <taxon>Fungi</taxon>
        <taxon>Dikarya</taxon>
        <taxon>Ascomycota</taxon>
        <taxon>Pezizomycotina</taxon>
        <taxon>Eurotiomycetes</taxon>
        <taxon>Eurotiomycetidae</taxon>
        <taxon>Eurotiales</taxon>
        <taxon>Aspergillaceae</taxon>
        <taxon>Aspergillus</taxon>
        <taxon>Aspergillus subgen. Circumdati</taxon>
    </lineage>
</organism>